<dbReference type="EMBL" id="CP001091">
    <property type="protein sequence ID" value="ACE60937.1"/>
    <property type="molecule type" value="Genomic_DNA"/>
</dbReference>
<dbReference type="RefSeq" id="WP_005607004.1">
    <property type="nucleotide sequence ID" value="NC_010939.1"/>
</dbReference>
<dbReference type="SMR" id="B3H0C5"/>
<dbReference type="KEGG" id="apa:APP7_0285"/>
<dbReference type="HOGENOM" id="CLU_087936_0_0_6"/>
<dbReference type="Proteomes" id="UP000001226">
    <property type="component" value="Chromosome"/>
</dbReference>
<dbReference type="GO" id="GO:0005737">
    <property type="term" value="C:cytoplasm"/>
    <property type="evidence" value="ECO:0007669"/>
    <property type="project" value="UniProtKB-SubCell"/>
</dbReference>
<dbReference type="GO" id="GO:0009379">
    <property type="term" value="C:Holliday junction helicase complex"/>
    <property type="evidence" value="ECO:0007669"/>
    <property type="project" value="InterPro"/>
</dbReference>
<dbReference type="GO" id="GO:0048476">
    <property type="term" value="C:Holliday junction resolvase complex"/>
    <property type="evidence" value="ECO:0007669"/>
    <property type="project" value="UniProtKB-UniRule"/>
</dbReference>
<dbReference type="GO" id="GO:0005524">
    <property type="term" value="F:ATP binding"/>
    <property type="evidence" value="ECO:0007669"/>
    <property type="project" value="InterPro"/>
</dbReference>
<dbReference type="GO" id="GO:0000400">
    <property type="term" value="F:four-way junction DNA binding"/>
    <property type="evidence" value="ECO:0007669"/>
    <property type="project" value="UniProtKB-UniRule"/>
</dbReference>
<dbReference type="GO" id="GO:0009378">
    <property type="term" value="F:four-way junction helicase activity"/>
    <property type="evidence" value="ECO:0007669"/>
    <property type="project" value="InterPro"/>
</dbReference>
<dbReference type="GO" id="GO:0006310">
    <property type="term" value="P:DNA recombination"/>
    <property type="evidence" value="ECO:0007669"/>
    <property type="project" value="UniProtKB-UniRule"/>
</dbReference>
<dbReference type="GO" id="GO:0006281">
    <property type="term" value="P:DNA repair"/>
    <property type="evidence" value="ECO:0007669"/>
    <property type="project" value="UniProtKB-UniRule"/>
</dbReference>
<dbReference type="CDD" id="cd14332">
    <property type="entry name" value="UBA_RuvA_C"/>
    <property type="match status" value="1"/>
</dbReference>
<dbReference type="FunFam" id="2.40.50.140:FF:000083">
    <property type="entry name" value="Holliday junction ATP-dependent DNA helicase RuvA"/>
    <property type="match status" value="1"/>
</dbReference>
<dbReference type="Gene3D" id="1.10.150.20">
    <property type="entry name" value="5' to 3' exonuclease, C-terminal subdomain"/>
    <property type="match status" value="1"/>
</dbReference>
<dbReference type="Gene3D" id="1.10.8.10">
    <property type="entry name" value="DNA helicase RuvA subunit, C-terminal domain"/>
    <property type="match status" value="1"/>
</dbReference>
<dbReference type="Gene3D" id="2.40.50.140">
    <property type="entry name" value="Nucleic acid-binding proteins"/>
    <property type="match status" value="1"/>
</dbReference>
<dbReference type="HAMAP" id="MF_00031">
    <property type="entry name" value="DNA_HJ_migration_RuvA"/>
    <property type="match status" value="1"/>
</dbReference>
<dbReference type="InterPro" id="IPR013849">
    <property type="entry name" value="DNA_helicase_Holl-junc_RuvA_I"/>
</dbReference>
<dbReference type="InterPro" id="IPR003583">
    <property type="entry name" value="Hlx-hairpin-Hlx_DNA-bd_motif"/>
</dbReference>
<dbReference type="InterPro" id="IPR012340">
    <property type="entry name" value="NA-bd_OB-fold"/>
</dbReference>
<dbReference type="InterPro" id="IPR000085">
    <property type="entry name" value="RuvA"/>
</dbReference>
<dbReference type="InterPro" id="IPR010994">
    <property type="entry name" value="RuvA_2-like"/>
</dbReference>
<dbReference type="InterPro" id="IPR011114">
    <property type="entry name" value="RuvA_C"/>
</dbReference>
<dbReference type="InterPro" id="IPR036267">
    <property type="entry name" value="RuvA_C_sf"/>
</dbReference>
<dbReference type="NCBIfam" id="TIGR00084">
    <property type="entry name" value="ruvA"/>
    <property type="match status" value="1"/>
</dbReference>
<dbReference type="Pfam" id="PF14520">
    <property type="entry name" value="HHH_5"/>
    <property type="match status" value="1"/>
</dbReference>
<dbReference type="Pfam" id="PF07499">
    <property type="entry name" value="RuvA_C"/>
    <property type="match status" value="1"/>
</dbReference>
<dbReference type="Pfam" id="PF01330">
    <property type="entry name" value="RuvA_N"/>
    <property type="match status" value="1"/>
</dbReference>
<dbReference type="SMART" id="SM00278">
    <property type="entry name" value="HhH1"/>
    <property type="match status" value="2"/>
</dbReference>
<dbReference type="SUPFAM" id="SSF46929">
    <property type="entry name" value="DNA helicase RuvA subunit, C-terminal domain"/>
    <property type="match status" value="1"/>
</dbReference>
<dbReference type="SUPFAM" id="SSF50249">
    <property type="entry name" value="Nucleic acid-binding proteins"/>
    <property type="match status" value="1"/>
</dbReference>
<dbReference type="SUPFAM" id="SSF47781">
    <property type="entry name" value="RuvA domain 2-like"/>
    <property type="match status" value="1"/>
</dbReference>
<gene>
    <name evidence="1" type="primary">ruvA</name>
    <name type="ordered locus">APP7_0285</name>
</gene>
<protein>
    <recommendedName>
        <fullName evidence="1">Holliday junction branch migration complex subunit RuvA</fullName>
    </recommendedName>
</protein>
<name>RUVA_ACTP7</name>
<feature type="chain" id="PRO_1000090275" description="Holliday junction branch migration complex subunit RuvA">
    <location>
        <begin position="1"/>
        <end position="201"/>
    </location>
</feature>
<feature type="region of interest" description="Domain I" evidence="1">
    <location>
        <begin position="1"/>
        <end position="64"/>
    </location>
</feature>
<feature type="region of interest" description="Domain II" evidence="1">
    <location>
        <begin position="65"/>
        <end position="143"/>
    </location>
</feature>
<feature type="region of interest" description="Flexible linker" evidence="1">
    <location>
        <begin position="144"/>
        <end position="154"/>
    </location>
</feature>
<feature type="region of interest" description="Domain III" evidence="1">
    <location>
        <begin position="154"/>
        <end position="201"/>
    </location>
</feature>
<reference key="1">
    <citation type="submission" date="2008-06" db="EMBL/GenBank/DDBJ databases">
        <title>Genome and proteome analysis of A. pleuropneumoniae serotype 7.</title>
        <authorList>
            <person name="Linke B."/>
            <person name="Buettner F."/>
            <person name="Martinez-Arias R."/>
            <person name="Goesmann A."/>
            <person name="Baltes N."/>
            <person name="Tegetmeyer H."/>
            <person name="Singh M."/>
            <person name="Gerlach G.F."/>
        </authorList>
    </citation>
    <scope>NUCLEOTIDE SEQUENCE [LARGE SCALE GENOMIC DNA]</scope>
    <source>
        <strain>AP76</strain>
    </source>
</reference>
<organism>
    <name type="scientific">Actinobacillus pleuropneumoniae serotype 7 (strain AP76)</name>
    <dbReference type="NCBI Taxonomy" id="537457"/>
    <lineage>
        <taxon>Bacteria</taxon>
        <taxon>Pseudomonadati</taxon>
        <taxon>Pseudomonadota</taxon>
        <taxon>Gammaproteobacteria</taxon>
        <taxon>Pasteurellales</taxon>
        <taxon>Pasteurellaceae</taxon>
        <taxon>Actinobacillus</taxon>
    </lineage>
</organism>
<comment type="function">
    <text evidence="1">The RuvA-RuvB-RuvC complex processes Holliday junction (HJ) DNA during genetic recombination and DNA repair, while the RuvA-RuvB complex plays an important role in the rescue of blocked DNA replication forks via replication fork reversal (RFR). RuvA specifically binds to HJ cruciform DNA, conferring on it an open structure. The RuvB hexamer acts as an ATP-dependent pump, pulling dsDNA into and through the RuvAB complex. HJ branch migration allows RuvC to scan DNA until it finds its consensus sequence, where it cleaves and resolves the cruciform DNA.</text>
</comment>
<comment type="subunit">
    <text evidence="1">Homotetramer. Forms an RuvA(8)-RuvB(12)-Holliday junction (HJ) complex. HJ DNA is sandwiched between 2 RuvA tetramers; dsDNA enters through RuvA and exits via RuvB. An RuvB hexamer assembles on each DNA strand where it exits the tetramer. Each RuvB hexamer is contacted by two RuvA subunits (via domain III) on 2 adjacent RuvB subunits; this complex drives branch migration. In the full resolvosome a probable DNA-RuvA(4)-RuvB(12)-RuvC(2) complex forms which resolves the HJ.</text>
</comment>
<comment type="subcellular location">
    <subcellularLocation>
        <location evidence="1">Cytoplasm</location>
    </subcellularLocation>
</comment>
<comment type="domain">
    <text evidence="1">Has three domains with a flexible linker between the domains II and III and assumes an 'L' shape. Domain III is highly mobile and contacts RuvB.</text>
</comment>
<comment type="similarity">
    <text evidence="1">Belongs to the RuvA family.</text>
</comment>
<sequence length="201" mass="22103">MIGRLHGKIIEKQPPEMVIDVQGVGYEVLLPMTSFYSLPQIGEEATIFTHLVVREDAHLLFGFAQKQDRTLFRELIKTNGVGPKLALAILSAMSVSQFANAVEHEELAKLTKIPGIGRKTAERLLVELKGKFKGVAQSDFFEEHSVETIVATHSHDPADEARDALVALGYKLADAEKMIKKVNKAGATSEQLIREALKASL</sequence>
<accession>B3H0C5</accession>
<evidence type="ECO:0000255" key="1">
    <source>
        <dbReference type="HAMAP-Rule" id="MF_00031"/>
    </source>
</evidence>
<keyword id="KW-0963">Cytoplasm</keyword>
<keyword id="KW-0227">DNA damage</keyword>
<keyword id="KW-0233">DNA recombination</keyword>
<keyword id="KW-0234">DNA repair</keyword>
<keyword id="KW-0238">DNA-binding</keyword>
<proteinExistence type="inferred from homology"/>